<organism evidence="5">
    <name type="scientific">Caenorhabditis elegans</name>
    <dbReference type="NCBI Taxonomy" id="6239"/>
    <lineage>
        <taxon>Eukaryota</taxon>
        <taxon>Metazoa</taxon>
        <taxon>Ecdysozoa</taxon>
        <taxon>Nematoda</taxon>
        <taxon>Chromadorea</taxon>
        <taxon>Rhabditida</taxon>
        <taxon>Rhabditina</taxon>
        <taxon>Rhabditomorpha</taxon>
        <taxon>Rhabditoidea</taxon>
        <taxon>Rhabditidae</taxon>
        <taxon>Peloderinae</taxon>
        <taxon>Caenorhabditis</taxon>
    </lineage>
</organism>
<name>ABH52_CAEEL</name>
<keyword id="KW-0025">Alternative splicing</keyword>
<keyword id="KW-0378">Hydrolase</keyword>
<keyword id="KW-0442">Lipid degradation</keyword>
<keyword id="KW-0551">Lipid droplet</keyword>
<keyword id="KW-0443">Lipid metabolism</keyword>
<keyword id="KW-1185">Reference proteome</keyword>
<reference evidence="5" key="1">
    <citation type="journal article" date="1998" name="Science">
        <title>Genome sequence of the nematode C. elegans: a platform for investigating biology.</title>
        <authorList>
            <consortium name="The C. elegans sequencing consortium"/>
        </authorList>
    </citation>
    <scope>NUCLEOTIDE SEQUENCE [LARGE SCALE GENOMIC DNA]</scope>
    <source>
        <strain evidence="5">Bristol N2</strain>
    </source>
</reference>
<reference evidence="4" key="2">
    <citation type="journal article" date="2015" name="PLoS Genet.">
        <title>The causative gene in Chanarian Dorfman syndrome regulates lipid droplet homeostasis in C. elegans.</title>
        <authorList>
            <person name="Xie M."/>
            <person name="Roy R."/>
        </authorList>
    </citation>
    <scope>FUNCTION</scope>
    <scope>INTERACTION WITH ATGL-1</scope>
    <scope>SUBCELLULAR LOCATION</scope>
    <scope>TISSUE SPECIFICITY</scope>
    <scope>DISRUPTION PHENOTYPE</scope>
</reference>
<reference key="3">
    <citation type="journal article" date="2016" name="PLoS Genet.">
        <authorList>
            <person name="Xie M."/>
            <person name="Roy R."/>
        </authorList>
    </citation>
    <scope>ERRATUM OF PUBMED:26083785</scope>
</reference>
<gene>
    <name evidence="6" type="primary">abhd-5.2</name>
    <name evidence="3" type="synonym">cgi-58</name>
    <name evidence="6" type="ORF">C37H5.3</name>
</gene>
<protein>
    <recommendedName>
        <fullName evidence="4">Abhydrolase domain-containing protein abhd-5.2</fullName>
    </recommendedName>
</protein>
<feature type="chain" id="PRO_0000442797" description="Abhydrolase domain-containing protein abhd-5.2" evidence="4">
    <location>
        <begin position="1"/>
        <end position="444"/>
    </location>
</feature>
<feature type="domain" description="AB hydrolase-1" evidence="1">
    <location>
        <begin position="162"/>
        <end position="409"/>
    </location>
</feature>
<feature type="splice variant" id="VSP_059282" description="In isoform b." evidence="4">
    <original>MFQKTDFLSKIFSSSSHPLTGSQNIVVKDPQTLDFAMQSQNEIVCSLRERSHMNTMSYAQTQMMAIDEIRAFQSEGHLHLKYISLIIAMMAETAVVTSRSW</original>
    <variation>MSIFEYTWYLSWIPSR</variation>
    <location>
        <begin position="1"/>
        <end position="101"/>
    </location>
</feature>
<accession>H2KZ86</accession>
<accession>Q8I7H5</accession>
<dbReference type="EMBL" id="BX284605">
    <property type="protein sequence ID" value="CCD66981.1"/>
    <property type="molecule type" value="Genomic_DNA"/>
</dbReference>
<dbReference type="EMBL" id="BX284605">
    <property type="protein sequence ID" value="CCD66982.1"/>
    <property type="molecule type" value="Genomic_DNA"/>
</dbReference>
<dbReference type="RefSeq" id="NP_504297.1">
    <molecule id="H2KZ86-1"/>
    <property type="nucleotide sequence ID" value="NM_071896.7"/>
</dbReference>
<dbReference type="RefSeq" id="NP_872178.1">
    <molecule id="H2KZ86-2"/>
    <property type="nucleotide sequence ID" value="NM_182378.4"/>
</dbReference>
<dbReference type="SMR" id="H2KZ86"/>
<dbReference type="FunCoup" id="H2KZ86">
    <property type="interactions" value="1785"/>
</dbReference>
<dbReference type="STRING" id="6239.C37H5.3a.1"/>
<dbReference type="ESTHER" id="caeel-C37H5.3">
    <property type="family name" value="CGI-58_ABHD5_ABHD4"/>
</dbReference>
<dbReference type="PaxDb" id="6239-C37H5.3a"/>
<dbReference type="PeptideAtlas" id="H2KZ86"/>
<dbReference type="EnsemblMetazoa" id="C37H5.3a.1">
    <molecule id="H2KZ86-1"/>
    <property type="protein sequence ID" value="C37H5.3a.1"/>
    <property type="gene ID" value="WBGene00016507"/>
</dbReference>
<dbReference type="EnsemblMetazoa" id="C37H5.3b.1">
    <molecule id="H2KZ86-2"/>
    <property type="protein sequence ID" value="C37H5.3b.1"/>
    <property type="gene ID" value="WBGene00016507"/>
</dbReference>
<dbReference type="GeneID" id="178877"/>
<dbReference type="KEGG" id="cel:CELE_C37H5.3"/>
<dbReference type="UCSC" id="C37H5.3a">
    <property type="organism name" value="c. elegans"/>
</dbReference>
<dbReference type="AGR" id="WB:WBGene00016507"/>
<dbReference type="CTD" id="178877"/>
<dbReference type="WormBase" id="C37H5.3a">
    <molecule id="H2KZ86-1"/>
    <property type="protein sequence ID" value="CE08627"/>
    <property type="gene ID" value="WBGene00016507"/>
    <property type="gene designation" value="abhd-5.2"/>
</dbReference>
<dbReference type="WormBase" id="C37H5.3b">
    <molecule id="H2KZ86-2"/>
    <property type="protein sequence ID" value="CE32824"/>
    <property type="gene ID" value="WBGene00016507"/>
    <property type="gene designation" value="abhd-5.2"/>
</dbReference>
<dbReference type="eggNOG" id="KOG4409">
    <property type="taxonomic scope" value="Eukaryota"/>
</dbReference>
<dbReference type="GeneTree" id="ENSGT00940000170137"/>
<dbReference type="InParanoid" id="H2KZ86"/>
<dbReference type="OMA" id="WMNSEYG"/>
<dbReference type="OrthoDB" id="7457040at2759"/>
<dbReference type="PhylomeDB" id="H2KZ86"/>
<dbReference type="PRO" id="PR:H2KZ86"/>
<dbReference type="Proteomes" id="UP000001940">
    <property type="component" value="Chromosome V"/>
</dbReference>
<dbReference type="Bgee" id="WBGene00016507">
    <property type="expression patterns" value="Expressed in pharyngeal muscle cell (C elegans) and 3 other cell types or tissues"/>
</dbReference>
<dbReference type="GO" id="GO:0005811">
    <property type="term" value="C:lipid droplet"/>
    <property type="evidence" value="ECO:0000318"/>
    <property type="project" value="GO_Central"/>
</dbReference>
<dbReference type="GO" id="GO:0005739">
    <property type="term" value="C:mitochondrion"/>
    <property type="evidence" value="ECO:0000318"/>
    <property type="project" value="GO_Central"/>
</dbReference>
<dbReference type="GO" id="GO:0052689">
    <property type="term" value="F:carboxylic ester hydrolase activity"/>
    <property type="evidence" value="ECO:0000318"/>
    <property type="project" value="GO_Central"/>
</dbReference>
<dbReference type="GO" id="GO:0042171">
    <property type="term" value="F:lysophosphatidic acid acyltransferase activity"/>
    <property type="evidence" value="ECO:0000318"/>
    <property type="project" value="GO_Central"/>
</dbReference>
<dbReference type="GO" id="GO:0016042">
    <property type="term" value="P:lipid catabolic process"/>
    <property type="evidence" value="ECO:0007669"/>
    <property type="project" value="UniProtKB-KW"/>
</dbReference>
<dbReference type="GO" id="GO:0055088">
    <property type="term" value="P:lipid homeostasis"/>
    <property type="evidence" value="ECO:0000318"/>
    <property type="project" value="GO_Central"/>
</dbReference>
<dbReference type="GO" id="GO:0006654">
    <property type="term" value="P:phosphatidic acid biosynthetic process"/>
    <property type="evidence" value="ECO:0000318"/>
    <property type="project" value="GO_Central"/>
</dbReference>
<dbReference type="FunFam" id="3.40.50.1820:FF:000320">
    <property type="entry name" value="Abhydrolase domain-containing protein abhd-5.2"/>
    <property type="match status" value="1"/>
</dbReference>
<dbReference type="Gene3D" id="3.40.50.1820">
    <property type="entry name" value="alpha/beta hydrolase"/>
    <property type="match status" value="1"/>
</dbReference>
<dbReference type="InterPro" id="IPR000073">
    <property type="entry name" value="AB_hydrolase_1"/>
</dbReference>
<dbReference type="InterPro" id="IPR029058">
    <property type="entry name" value="AB_hydrolase_fold"/>
</dbReference>
<dbReference type="PANTHER" id="PTHR42886:SF43">
    <property type="entry name" value="ABHYDROLASE DOMAIN-CONTAINING PROTEIN ABHD-5.1-RELATED"/>
    <property type="match status" value="1"/>
</dbReference>
<dbReference type="PANTHER" id="PTHR42886">
    <property type="entry name" value="RE40534P-RELATED"/>
    <property type="match status" value="1"/>
</dbReference>
<dbReference type="Pfam" id="PF00561">
    <property type="entry name" value="Abhydrolase_1"/>
    <property type="match status" value="1"/>
</dbReference>
<dbReference type="PRINTS" id="PR00111">
    <property type="entry name" value="ABHYDROLASE"/>
</dbReference>
<dbReference type="SUPFAM" id="SSF53474">
    <property type="entry name" value="alpha/beta-Hydrolases"/>
    <property type="match status" value="1"/>
</dbReference>
<proteinExistence type="evidence at protein level"/>
<comment type="function">
    <text evidence="2">Acts coordinately with phospholipase atgl-1 within the lipolytic cascade to distribute stored energy to tissues to maintain energy levels during the dauer phase. Localizes atgl-1 to lipid droplets, possibly to facilitate triglyceride hydrolysis. Regulates lipid droplet size, lipid content, the exchange of lipids between lipid droplets and fusion of lipid droplets during the dauer phase.</text>
</comment>
<comment type="subunit">
    <text evidence="2">Interacts with atgl-1; the interaction tethers atgl-1 to lipid droplets.</text>
</comment>
<comment type="subcellular location">
    <subcellularLocation>
        <location evidence="2">Lipid droplet</location>
    </subcellularLocation>
</comment>
<comment type="alternative products">
    <event type="alternative splicing"/>
    <isoform>
        <id>H2KZ86-1</id>
        <name evidence="6">a</name>
        <sequence type="displayed"/>
    </isoform>
    <isoform>
        <id>H2KZ86-2</id>
        <name evidence="7">b</name>
        <sequence type="described" ref="VSP_059282"/>
    </isoform>
</comment>
<comment type="tissue specificity">
    <text evidence="2">Expressed in the hypodermis and intestine.</text>
</comment>
<comment type="disruption phenotype">
    <text evidence="2">Increased survival of dauer larvae and reduced lipase activity in a daf-2 constitutive dauer phase mutant background.</text>
</comment>
<comment type="similarity">
    <text evidence="4">Belongs to the peptidase S33 family. ABHD4/ABHD5 subfamily.</text>
</comment>
<evidence type="ECO:0000255" key="1"/>
<evidence type="ECO:0000269" key="2">
    <source>
    </source>
</evidence>
<evidence type="ECO:0000303" key="3">
    <source>
    </source>
</evidence>
<evidence type="ECO:0000305" key="4"/>
<evidence type="ECO:0000312" key="5">
    <source>
        <dbReference type="Proteomes" id="UP000001940"/>
    </source>
</evidence>
<evidence type="ECO:0000312" key="6">
    <source>
        <dbReference type="WormBase" id="C37H5.3a"/>
    </source>
</evidence>
<evidence type="ECO:0000312" key="7">
    <source>
        <dbReference type="WormBase" id="C37H5.3b"/>
    </source>
</evidence>
<sequence length="444" mass="50488">MFQKTDFLSKIFSSSSHPLTGSQNIVVKDPQTLDFAMQSQNEIVCSLRERSHMNTMSYAQTQMMAIDEIRAFQSEGHLHLKYISLIIAMMAETAVVTSRSWFPYFSCPSKSQRLAEAEGRILSALGIKYLARLIQIPFKNTEISTITVNCESEQPIVKAKYPIVLIHGFGAGVALWGSAIKRLAQFQTVHAFDLPGFGRSSRPKFSSDPETAETEMIDSIEQWRDKMNLEKMNLVGHSFGGYLATSYALKYPKRVENLILADPWGFNEMDPEFAQKLTSRQKNIFWVIQQFNPLAVLRLVGGYGPSLVRRLRPDLALKYSEDVYDYIYLANSRDPTGEEVFKCLSENLGWAKQPMSKRFHELDNTVPVTFIHGERSWIDWRTTRRLFGELEHVESHIMDSAGHHVYADDADKFVQLVIGSLKDGKTGELVPEEVNLEEEIVTPI</sequence>